<feature type="chain" id="PRO_0000452808" description="Guanylate cyclase">
    <location>
        <begin position="1"/>
        <end position="4367"/>
    </location>
</feature>
<feature type="topological domain" description="Cytoplasmic" evidence="12">
    <location>
        <begin position="1"/>
        <end position="150"/>
    </location>
</feature>
<feature type="transmembrane region" description="Helical" evidence="3">
    <location>
        <begin position="151"/>
        <end position="171"/>
    </location>
</feature>
<feature type="topological domain" description="Extracellular" evidence="12">
    <location>
        <begin position="172"/>
        <end position="174"/>
    </location>
</feature>
<feature type="transmembrane region" description="Helical" evidence="3">
    <location>
        <begin position="175"/>
        <end position="195"/>
    </location>
</feature>
<feature type="topological domain" description="Cytoplasmic" evidence="12">
    <location>
        <begin position="196"/>
        <end position="373"/>
    </location>
</feature>
<feature type="transmembrane region" description="Helical" evidence="3">
    <location>
        <begin position="374"/>
        <end position="394"/>
    </location>
</feature>
<feature type="topological domain" description="Extracellular" evidence="12">
    <location>
        <begin position="395"/>
        <end position="452"/>
    </location>
</feature>
<feature type="transmembrane region" description="Helical" evidence="3">
    <location>
        <begin position="453"/>
        <end position="473"/>
    </location>
</feature>
<feature type="topological domain" description="Cytoplasmic" evidence="12">
    <location>
        <begin position="474"/>
        <end position="2258"/>
    </location>
</feature>
<feature type="transmembrane region" description="Helical" evidence="3">
    <location>
        <begin position="2259"/>
        <end position="2279"/>
    </location>
</feature>
<feature type="topological domain" description="Extracellular" evidence="12">
    <location>
        <begin position="2280"/>
        <end position="2289"/>
    </location>
</feature>
<feature type="transmembrane region" description="Helical" evidence="3">
    <location>
        <begin position="2290"/>
        <end position="2310"/>
    </location>
</feature>
<feature type="topological domain" description="Cytoplasmic" evidence="12">
    <location>
        <begin position="2311"/>
        <end position="2343"/>
    </location>
</feature>
<feature type="transmembrane region" description="Helical" evidence="3">
    <location>
        <begin position="2344"/>
        <end position="2364"/>
    </location>
</feature>
<feature type="topological domain" description="Extracellular" evidence="12">
    <location>
        <begin position="2365"/>
        <end position="2376"/>
    </location>
</feature>
<feature type="transmembrane region" description="Helical" evidence="3">
    <location>
        <begin position="2377"/>
        <end position="2397"/>
    </location>
</feature>
<feature type="topological domain" description="Cytoplasmic" evidence="12">
    <location>
        <begin position="2398"/>
        <end position="2408"/>
    </location>
</feature>
<feature type="transmembrane region" description="Helical" evidence="3">
    <location>
        <begin position="2409"/>
        <end position="2429"/>
    </location>
</feature>
<feature type="topological domain" description="Extracellular" evidence="12">
    <location>
        <begin position="2430"/>
        <end position="2444"/>
    </location>
</feature>
<feature type="transmembrane region" description="Helical" evidence="3">
    <location>
        <begin position="2445"/>
        <end position="2465"/>
    </location>
</feature>
<feature type="topological domain" description="Cytoplasmic" evidence="12">
    <location>
        <begin position="2466"/>
        <end position="2724"/>
    </location>
</feature>
<feature type="transmembrane region" description="Helical" evidence="3">
    <location>
        <begin position="2725"/>
        <end position="2745"/>
    </location>
</feature>
<feature type="topological domain" description="Extracellular" evidence="12">
    <location>
        <begin position="2746"/>
        <end position="2762"/>
    </location>
</feature>
<feature type="transmembrane region" description="Helical" evidence="3">
    <location>
        <begin position="2763"/>
        <end position="2783"/>
    </location>
</feature>
<feature type="topological domain" description="Cytoplasmic" evidence="12">
    <location>
        <begin position="2784"/>
        <end position="2785"/>
    </location>
</feature>
<feature type="transmembrane region" description="Helical" evidence="3">
    <location>
        <begin position="2786"/>
        <end position="2806"/>
    </location>
</feature>
<feature type="topological domain" description="Extracellular" evidence="12">
    <location>
        <begin position="2807"/>
        <end position="2823"/>
    </location>
</feature>
<feature type="transmembrane region" description="Helical" evidence="3">
    <location>
        <begin position="2824"/>
        <end position="2844"/>
    </location>
</feature>
<feature type="topological domain" description="Cytoplasmic" evidence="12">
    <location>
        <begin position="2845"/>
        <end position="2858"/>
    </location>
</feature>
<feature type="transmembrane region" description="Helical" evidence="3">
    <location>
        <begin position="2859"/>
        <end position="2879"/>
    </location>
</feature>
<feature type="topological domain" description="Extracellular" evidence="12">
    <location>
        <begin position="2880"/>
        <end position="2903"/>
    </location>
</feature>
<feature type="transmembrane region" description="Helical" evidence="3">
    <location>
        <begin position="2904"/>
        <end position="2924"/>
    </location>
</feature>
<feature type="topological domain" description="Cytoplasmic" evidence="12">
    <location>
        <begin position="2925"/>
        <end position="3693"/>
    </location>
</feature>
<feature type="transmembrane region" description="Helical" evidence="3">
    <location>
        <begin position="3694"/>
        <end position="3714"/>
    </location>
</feature>
<feature type="topological domain" description="Extracellular" evidence="12">
    <location>
        <begin position="3715"/>
        <end position="3736"/>
    </location>
</feature>
<feature type="transmembrane region" description="Helical" evidence="3">
    <location>
        <begin position="3737"/>
        <end position="3757"/>
    </location>
</feature>
<feature type="topological domain" description="Cytoplasmic" evidence="12">
    <location>
        <begin position="3758"/>
        <end position="3772"/>
    </location>
</feature>
<feature type="transmembrane region" description="Helical" evidence="3">
    <location>
        <begin position="3773"/>
        <end position="3793"/>
    </location>
</feature>
<feature type="topological domain" description="Extracellular" evidence="12">
    <location>
        <begin position="3794"/>
        <end position="3895"/>
    </location>
</feature>
<feature type="transmembrane region" description="Helical" evidence="3">
    <location>
        <begin position="3896"/>
        <end position="3916"/>
    </location>
</feature>
<feature type="topological domain" description="Cytoplasmic" evidence="12">
    <location>
        <begin position="3917"/>
        <end position="3921"/>
    </location>
</feature>
<feature type="transmembrane region" description="Helical" evidence="3">
    <location>
        <begin position="3922"/>
        <end position="3942"/>
    </location>
</feature>
<feature type="topological domain" description="Extracellular" evidence="12">
    <location>
        <begin position="3943"/>
        <end position="3950"/>
    </location>
</feature>
<feature type="transmembrane region" description="Helical" evidence="3">
    <location>
        <begin position="3951"/>
        <end position="3971"/>
    </location>
</feature>
<feature type="topological domain" description="Cytoplasmic" evidence="9">
    <location>
        <begin position="3972"/>
        <end position="4367"/>
    </location>
</feature>
<feature type="domain" description="Guanylate cyclase 1" evidence="4">
    <location>
        <begin position="2942"/>
        <end position="3150"/>
    </location>
</feature>
<feature type="domain" description="Guanylate cyclase 2" evidence="4">
    <location>
        <begin position="4024"/>
        <end position="4159"/>
    </location>
</feature>
<feature type="region of interest" description="Disordered" evidence="5">
    <location>
        <begin position="1"/>
        <end position="70"/>
    </location>
</feature>
<feature type="region of interest" description="Disordered" evidence="5">
    <location>
        <begin position="402"/>
        <end position="426"/>
    </location>
</feature>
<feature type="region of interest" description="Disordered" evidence="5">
    <location>
        <begin position="486"/>
        <end position="535"/>
    </location>
</feature>
<feature type="region of interest" description="Disordered" evidence="5">
    <location>
        <begin position="550"/>
        <end position="699"/>
    </location>
</feature>
<feature type="region of interest" description="Disordered" evidence="5">
    <location>
        <begin position="831"/>
        <end position="918"/>
    </location>
</feature>
<feature type="region of interest" description="Disordered" evidence="5">
    <location>
        <begin position="932"/>
        <end position="966"/>
    </location>
</feature>
<feature type="region of interest" description="Disordered" evidence="5">
    <location>
        <begin position="980"/>
        <end position="1047"/>
    </location>
</feature>
<feature type="region of interest" description="Disordered" evidence="5">
    <location>
        <begin position="1079"/>
        <end position="1164"/>
    </location>
</feature>
<feature type="region of interest" description="Disordered" evidence="5">
    <location>
        <begin position="1344"/>
        <end position="1593"/>
    </location>
</feature>
<feature type="region of interest" description="Disordered" evidence="5">
    <location>
        <begin position="1607"/>
        <end position="1652"/>
    </location>
</feature>
<feature type="region of interest" description="Disordered" evidence="5">
    <location>
        <begin position="1773"/>
        <end position="1861"/>
    </location>
</feature>
<feature type="region of interest" description="Disordered" evidence="5">
    <location>
        <begin position="1881"/>
        <end position="1946"/>
    </location>
</feature>
<feature type="region of interest" description="Disordered" evidence="5">
    <location>
        <begin position="3214"/>
        <end position="3245"/>
    </location>
</feature>
<feature type="region of interest" description="Disordered" evidence="5">
    <location>
        <begin position="3359"/>
        <end position="3402"/>
    </location>
</feature>
<feature type="region of interest" description="Disordered" evidence="5">
    <location>
        <begin position="3456"/>
        <end position="3475"/>
    </location>
</feature>
<feature type="region of interest" description="Disordered" evidence="5">
    <location>
        <begin position="3485"/>
        <end position="3508"/>
    </location>
</feature>
<feature type="region of interest" description="Disordered" evidence="5">
    <location>
        <begin position="3523"/>
        <end position="3596"/>
    </location>
</feature>
<feature type="region of interest" description="Disordered" evidence="5">
    <location>
        <begin position="3620"/>
        <end position="3653"/>
    </location>
</feature>
<feature type="region of interest" description="Disordered" evidence="5">
    <location>
        <begin position="4292"/>
        <end position="4367"/>
    </location>
</feature>
<feature type="compositionally biased region" description="Polar residues" evidence="5">
    <location>
        <begin position="1"/>
        <end position="10"/>
    </location>
</feature>
<feature type="compositionally biased region" description="Basic and acidic residues" evidence="5">
    <location>
        <begin position="19"/>
        <end position="33"/>
    </location>
</feature>
<feature type="compositionally biased region" description="Polar residues" evidence="5">
    <location>
        <begin position="54"/>
        <end position="63"/>
    </location>
</feature>
<feature type="compositionally biased region" description="Low complexity" evidence="5">
    <location>
        <begin position="407"/>
        <end position="426"/>
    </location>
</feature>
<feature type="compositionally biased region" description="Polar residues" evidence="5">
    <location>
        <begin position="523"/>
        <end position="535"/>
    </location>
</feature>
<feature type="compositionally biased region" description="Basic and acidic residues" evidence="5">
    <location>
        <begin position="605"/>
        <end position="628"/>
    </location>
</feature>
<feature type="compositionally biased region" description="Basic and acidic residues" evidence="5">
    <location>
        <begin position="670"/>
        <end position="679"/>
    </location>
</feature>
<feature type="compositionally biased region" description="Low complexity" evidence="5">
    <location>
        <begin position="850"/>
        <end position="863"/>
    </location>
</feature>
<feature type="compositionally biased region" description="Polar residues" evidence="5">
    <location>
        <begin position="880"/>
        <end position="892"/>
    </location>
</feature>
<feature type="compositionally biased region" description="Low complexity" evidence="5">
    <location>
        <begin position="906"/>
        <end position="917"/>
    </location>
</feature>
<feature type="compositionally biased region" description="Basic and acidic residues" evidence="5">
    <location>
        <begin position="932"/>
        <end position="948"/>
    </location>
</feature>
<feature type="compositionally biased region" description="Low complexity" evidence="5">
    <location>
        <begin position="983"/>
        <end position="996"/>
    </location>
</feature>
<feature type="compositionally biased region" description="Basic and acidic residues" evidence="5">
    <location>
        <begin position="1025"/>
        <end position="1047"/>
    </location>
</feature>
<feature type="compositionally biased region" description="Polar residues" evidence="5">
    <location>
        <begin position="1084"/>
        <end position="1094"/>
    </location>
</feature>
<feature type="compositionally biased region" description="Polar residues" evidence="5">
    <location>
        <begin position="1117"/>
        <end position="1130"/>
    </location>
</feature>
<feature type="compositionally biased region" description="Low complexity" evidence="5">
    <location>
        <begin position="1344"/>
        <end position="1357"/>
    </location>
</feature>
<feature type="compositionally biased region" description="Gly residues" evidence="5">
    <location>
        <begin position="1370"/>
        <end position="1381"/>
    </location>
</feature>
<feature type="compositionally biased region" description="Gly residues" evidence="5">
    <location>
        <begin position="1389"/>
        <end position="1400"/>
    </location>
</feature>
<feature type="compositionally biased region" description="Pro residues" evidence="5">
    <location>
        <begin position="1443"/>
        <end position="1454"/>
    </location>
</feature>
<feature type="compositionally biased region" description="Basic and acidic residues" evidence="5">
    <location>
        <begin position="1527"/>
        <end position="1542"/>
    </location>
</feature>
<feature type="compositionally biased region" description="Acidic residues" evidence="5">
    <location>
        <begin position="1543"/>
        <end position="1567"/>
    </location>
</feature>
<feature type="compositionally biased region" description="Low complexity" evidence="5">
    <location>
        <begin position="1583"/>
        <end position="1593"/>
    </location>
</feature>
<feature type="compositionally biased region" description="Polar residues" evidence="5">
    <location>
        <begin position="1628"/>
        <end position="1652"/>
    </location>
</feature>
<feature type="compositionally biased region" description="Polar residues" evidence="5">
    <location>
        <begin position="1779"/>
        <end position="1791"/>
    </location>
</feature>
<feature type="compositionally biased region" description="Polar residues" evidence="5">
    <location>
        <begin position="1843"/>
        <end position="1852"/>
    </location>
</feature>
<feature type="compositionally biased region" description="Basic and acidic residues" evidence="5">
    <location>
        <begin position="1881"/>
        <end position="1922"/>
    </location>
</feature>
<feature type="compositionally biased region" description="Polar residues" evidence="5">
    <location>
        <begin position="1933"/>
        <end position="1942"/>
    </location>
</feature>
<feature type="compositionally biased region" description="Basic and acidic residues" evidence="5">
    <location>
        <begin position="3383"/>
        <end position="3402"/>
    </location>
</feature>
<feature type="compositionally biased region" description="Basic and acidic residues" evidence="5">
    <location>
        <begin position="3485"/>
        <end position="3499"/>
    </location>
</feature>
<feature type="compositionally biased region" description="Basic and acidic residues" evidence="5">
    <location>
        <begin position="3529"/>
        <end position="3541"/>
    </location>
</feature>
<feature type="compositionally biased region" description="Basic and acidic residues" evidence="5">
    <location>
        <begin position="3549"/>
        <end position="3569"/>
    </location>
</feature>
<feature type="compositionally biased region" description="Low complexity" evidence="5">
    <location>
        <begin position="3626"/>
        <end position="3637"/>
    </location>
</feature>
<feature type="compositionally biased region" description="Basic and acidic residues" evidence="5">
    <location>
        <begin position="4333"/>
        <end position="4344"/>
    </location>
</feature>
<feature type="compositionally biased region" description="Polar residues" evidence="5">
    <location>
        <begin position="4356"/>
        <end position="4367"/>
    </location>
</feature>
<feature type="binding site" evidence="4">
    <location>
        <position position="4029"/>
    </location>
    <ligand>
        <name>Mg(2+)</name>
        <dbReference type="ChEBI" id="CHEBI:18420"/>
        <label>1</label>
    </ligand>
</feature>
<feature type="binding site" evidence="4">
    <location>
        <position position="4029"/>
    </location>
    <ligand>
        <name>Mg(2+)</name>
        <dbReference type="ChEBI" id="CHEBI:18420"/>
        <label>2</label>
    </ligand>
</feature>
<feature type="binding site" evidence="4">
    <location>
        <position position="4030"/>
    </location>
    <ligand>
        <name>Mg(2+)</name>
        <dbReference type="ChEBI" id="CHEBI:18420"/>
        <label>2</label>
    </ligand>
</feature>
<feature type="binding site" evidence="4">
    <location>
        <position position="4073"/>
    </location>
    <ligand>
        <name>Mg(2+)</name>
        <dbReference type="ChEBI" id="CHEBI:18420"/>
        <label>1</label>
    </ligand>
</feature>
<feature type="binding site" evidence="4">
    <location>
        <position position="4073"/>
    </location>
    <ligand>
        <name>Mg(2+)</name>
        <dbReference type="ChEBI" id="CHEBI:18420"/>
        <label>2</label>
    </ligand>
</feature>
<feature type="mutagenesis site" description="Stimulated microneme secretion is partially reduced. Complete loss of parasite lytic growth. Loss of apical localization." evidence="6">
    <location>
        <begin position="2"/>
        <end position="2699"/>
    </location>
</feature>
<feature type="mutagenesis site" description="Loss of basal microneme secretion but stimulated microneme secretion is only partially reduced. Complete loss of parasite lytic growth. No effect on apical localization." evidence="6">
    <original>D</original>
    <variation>A</variation>
    <location>
        <position position="782"/>
    </location>
</feature>
<feature type="mutagenesis site" description="Lethal in tachyzoites." evidence="7">
    <original>D</original>
    <variation>E</variation>
    <location>
        <position position="782"/>
    </location>
</feature>
<feature type="mutagenesis site" description="Loss of basal and stimulated microneme secretion. Complete loss of parasite lytic growth. No effect on apical localization." evidence="6">
    <location>
        <begin position="2700"/>
        <end position="4367"/>
    </location>
</feature>
<feature type="mutagenesis site" description="Loss of basal and stimulated microneme secretion. Complete loss of parasite lytic growth. No effect on apical localization." evidence="6">
    <original>E</original>
    <variation>A</variation>
    <location>
        <position position="2987"/>
    </location>
</feature>
<dbReference type="EC" id="4.6.1.2" evidence="13 14 15"/>
<dbReference type="EMBL" id="AAQM03000244">
    <property type="protein sequence ID" value="EPR59074.1"/>
    <property type="molecule type" value="Genomic_DNA"/>
</dbReference>
<dbReference type="EnsemblProtists" id="EPR59074">
    <property type="protein sequence ID" value="EPR59074"/>
    <property type="gene ID" value="TGGT1_254370"/>
</dbReference>
<dbReference type="VEuPathDB" id="ToxoDB:TGGT1_254370"/>
<dbReference type="OrthoDB" id="2217at5809"/>
<dbReference type="Proteomes" id="UP000005641">
    <property type="component" value="Unassembled WGS sequence"/>
</dbReference>
<dbReference type="GO" id="GO:0016324">
    <property type="term" value="C:apical plasma membrane"/>
    <property type="evidence" value="ECO:0000314"/>
    <property type="project" value="UniProtKB"/>
</dbReference>
<dbReference type="GO" id="GO:0005524">
    <property type="term" value="F:ATP binding"/>
    <property type="evidence" value="ECO:0007669"/>
    <property type="project" value="InterPro"/>
</dbReference>
<dbReference type="GO" id="GO:0016887">
    <property type="term" value="F:ATP hydrolysis activity"/>
    <property type="evidence" value="ECO:0007669"/>
    <property type="project" value="InterPro"/>
</dbReference>
<dbReference type="GO" id="GO:0140326">
    <property type="term" value="F:ATPase-coupled intramembrane lipid transporter activity"/>
    <property type="evidence" value="ECO:0007669"/>
    <property type="project" value="TreeGrafter"/>
</dbReference>
<dbReference type="GO" id="GO:0004383">
    <property type="term" value="F:guanylate cyclase activity"/>
    <property type="evidence" value="ECO:0007669"/>
    <property type="project" value="UniProtKB-EC"/>
</dbReference>
<dbReference type="GO" id="GO:0046872">
    <property type="term" value="F:metal ion binding"/>
    <property type="evidence" value="ECO:0007669"/>
    <property type="project" value="UniProtKB-KW"/>
</dbReference>
<dbReference type="GO" id="GO:0035865">
    <property type="term" value="P:cellular response to potassium ion"/>
    <property type="evidence" value="ECO:0000315"/>
    <property type="project" value="UniProtKB"/>
</dbReference>
<dbReference type="GO" id="GO:0006182">
    <property type="term" value="P:cGMP biosynthetic process"/>
    <property type="evidence" value="ECO:0000315"/>
    <property type="project" value="UniProtKB"/>
</dbReference>
<dbReference type="GO" id="GO:0035556">
    <property type="term" value="P:intracellular signal transduction"/>
    <property type="evidence" value="ECO:0007669"/>
    <property type="project" value="InterPro"/>
</dbReference>
<dbReference type="GO" id="GO:0045332">
    <property type="term" value="P:phospholipid translocation"/>
    <property type="evidence" value="ECO:0007669"/>
    <property type="project" value="TreeGrafter"/>
</dbReference>
<dbReference type="GO" id="GO:2000147">
    <property type="term" value="P:positive regulation of cell motility"/>
    <property type="evidence" value="ECO:0000315"/>
    <property type="project" value="UniProtKB"/>
</dbReference>
<dbReference type="GO" id="GO:1903307">
    <property type="term" value="P:positive regulation of regulated secretory pathway"/>
    <property type="evidence" value="ECO:0000315"/>
    <property type="project" value="UniProtKB"/>
</dbReference>
<dbReference type="GO" id="GO:0010447">
    <property type="term" value="P:response to acidic pH"/>
    <property type="evidence" value="ECO:0000315"/>
    <property type="project" value="UniProtKB"/>
</dbReference>
<dbReference type="GO" id="GO:0075293">
    <property type="term" value="P:response to host pH environment"/>
    <property type="evidence" value="ECO:0000315"/>
    <property type="project" value="UniProtKB"/>
</dbReference>
<dbReference type="CDD" id="cd07302">
    <property type="entry name" value="CHD"/>
    <property type="match status" value="2"/>
</dbReference>
<dbReference type="FunFam" id="3.30.70.1230:FF:000026">
    <property type="entry name" value="Guanylyl cyclase, putative"/>
    <property type="match status" value="1"/>
</dbReference>
<dbReference type="Gene3D" id="3.40.1110.10">
    <property type="entry name" value="Calcium-transporting ATPase, cytoplasmic domain N"/>
    <property type="match status" value="2"/>
</dbReference>
<dbReference type="Gene3D" id="2.70.150.10">
    <property type="entry name" value="Calcium-transporting ATPase, cytoplasmic transduction domain A"/>
    <property type="match status" value="1"/>
</dbReference>
<dbReference type="Gene3D" id="3.40.50.1000">
    <property type="entry name" value="HAD superfamily/HAD-like"/>
    <property type="match status" value="1"/>
</dbReference>
<dbReference type="Gene3D" id="3.30.70.1230">
    <property type="entry name" value="Nucleotide cyclase"/>
    <property type="match status" value="2"/>
</dbReference>
<dbReference type="InterPro" id="IPR001054">
    <property type="entry name" value="A/G_cyclase"/>
</dbReference>
<dbReference type="InterPro" id="IPR023299">
    <property type="entry name" value="ATPase_P-typ_cyto_dom_N"/>
</dbReference>
<dbReference type="InterPro" id="IPR018303">
    <property type="entry name" value="ATPase_P-typ_P_site"/>
</dbReference>
<dbReference type="InterPro" id="IPR023298">
    <property type="entry name" value="ATPase_P-typ_TM_dom_sf"/>
</dbReference>
<dbReference type="InterPro" id="IPR008250">
    <property type="entry name" value="ATPase_P-typ_transduc_dom_A_sf"/>
</dbReference>
<dbReference type="InterPro" id="IPR036412">
    <property type="entry name" value="HAD-like_sf"/>
</dbReference>
<dbReference type="InterPro" id="IPR023214">
    <property type="entry name" value="HAD_sf"/>
</dbReference>
<dbReference type="InterPro" id="IPR029787">
    <property type="entry name" value="Nucleotide_cyclase"/>
</dbReference>
<dbReference type="InterPro" id="IPR032631">
    <property type="entry name" value="P-type_ATPase_N"/>
</dbReference>
<dbReference type="InterPro" id="IPR001757">
    <property type="entry name" value="P_typ_ATPase"/>
</dbReference>
<dbReference type="InterPro" id="IPR032630">
    <property type="entry name" value="P_typ_ATPase_c"/>
</dbReference>
<dbReference type="NCBIfam" id="TIGR01494">
    <property type="entry name" value="ATPase_P-type"/>
    <property type="match status" value="1"/>
</dbReference>
<dbReference type="PANTHER" id="PTHR24092:SF175">
    <property type="entry name" value="PHOSPHOLIPID-TRANSPORTING ATPASE"/>
    <property type="match status" value="1"/>
</dbReference>
<dbReference type="PANTHER" id="PTHR24092">
    <property type="entry name" value="PROBABLE PHOSPHOLIPID-TRANSPORTING ATPASE"/>
    <property type="match status" value="1"/>
</dbReference>
<dbReference type="Pfam" id="PF13246">
    <property type="entry name" value="Cation_ATPase"/>
    <property type="match status" value="1"/>
</dbReference>
<dbReference type="Pfam" id="PF00211">
    <property type="entry name" value="Guanylate_cyc"/>
    <property type="match status" value="2"/>
</dbReference>
<dbReference type="Pfam" id="PF16212">
    <property type="entry name" value="PhoLip_ATPase_C"/>
    <property type="match status" value="1"/>
</dbReference>
<dbReference type="Pfam" id="PF16209">
    <property type="entry name" value="PhoLip_ATPase_N"/>
    <property type="match status" value="1"/>
</dbReference>
<dbReference type="SMART" id="SM00044">
    <property type="entry name" value="CYCc"/>
    <property type="match status" value="2"/>
</dbReference>
<dbReference type="SUPFAM" id="SSF81653">
    <property type="entry name" value="Calcium ATPase, transduction domain A"/>
    <property type="match status" value="1"/>
</dbReference>
<dbReference type="SUPFAM" id="SSF81665">
    <property type="entry name" value="Calcium ATPase, transmembrane domain M"/>
    <property type="match status" value="1"/>
</dbReference>
<dbReference type="SUPFAM" id="SSF56784">
    <property type="entry name" value="HAD-like"/>
    <property type="match status" value="1"/>
</dbReference>
<dbReference type="SUPFAM" id="SSF81660">
    <property type="entry name" value="Metal cation-transporting ATPase, ATP-binding domain N"/>
    <property type="match status" value="1"/>
</dbReference>
<dbReference type="SUPFAM" id="SSF55073">
    <property type="entry name" value="Nucleotide cyclase"/>
    <property type="match status" value="2"/>
</dbReference>
<dbReference type="PROSITE" id="PS00154">
    <property type="entry name" value="ATPASE_E1_E2"/>
    <property type="match status" value="1"/>
</dbReference>
<dbReference type="PROSITE" id="PS50125">
    <property type="entry name" value="GUANYLATE_CYCLASE_2"/>
    <property type="match status" value="2"/>
</dbReference>
<proteinExistence type="evidence at protein level"/>
<reference evidence="17" key="1">
    <citation type="submission" date="2013-05" db="EMBL/GenBank/DDBJ databases">
        <authorList>
            <person name="Sibley D."/>
            <person name="Venepally P."/>
            <person name="Karamycheva S."/>
            <person name="Hadjithomas M."/>
            <person name="Khan A."/>
            <person name="Brunk B."/>
            <person name="Roos D."/>
            <person name="Caler E."/>
            <person name="Lorenzi H."/>
        </authorList>
    </citation>
    <scope>NUCLEOTIDE SEQUENCE [LARGE SCALE GENOMIC DNA]</scope>
    <source>
        <strain evidence="17">ATCC 50853 / GT1</strain>
    </source>
</reference>
<reference evidence="12" key="2">
    <citation type="journal article" date="2018" name="Cell Host Microbe">
        <title>Essential cGMP Signaling in Toxoplasma Is Initiated by a Hybrid P-Type ATPase-Guanylate Cyclase.</title>
        <authorList>
            <person name="Brown K.M."/>
            <person name="Sibley L.D."/>
        </authorList>
    </citation>
    <scope>FUNCTION</scope>
    <scope>SUBCELLULAR LOCATION</scope>
    <scope>DOMAIN</scope>
    <scope>DISRUPTION PHENOTYPE</scope>
    <scope>MUTAGENESIS OF 2-LYS--ASP-2699; ASP-782; 2700-MET--SER-4367 AND GLU-2987</scope>
    <source>
        <strain evidence="6">RH</strain>
    </source>
</reference>
<reference evidence="12" key="3">
    <citation type="journal article" date="2019" name="J. Biol. Chem.">
        <title>An apically located hybrid guanylate cyclase-ATPase is critical for the initiation of Ca2+ signaling and motility in Toxoplasma gondii.</title>
        <authorList>
            <person name="Yang L."/>
            <person name="Uboldi A.D."/>
            <person name="Seizova S."/>
            <person name="Wilde M.L."/>
            <person name="Coffey M.J."/>
            <person name="Katris N.J."/>
            <person name="Yamaryo-Botte Y."/>
            <person name="Kocan M."/>
            <person name="Bathgate R.A.D."/>
            <person name="Stewart R.J."/>
            <person name="McConville M.J."/>
            <person name="Thompson P.E."/>
            <person name="Botte C.Y."/>
            <person name="Tonkin C.J."/>
        </authorList>
    </citation>
    <scope>FUNCTION</scope>
    <scope>CATALYTIC ACTIVITY</scope>
    <scope>SUBCELLULAR LOCATION</scope>
    <scope>DISRUPTION PHENOTYPE</scope>
    <source>
        <strain evidence="8">RH</strain>
    </source>
</reference>
<reference evidence="12" key="4">
    <citation type="journal article" date="2019" name="Life. Sci Alliance">
        <title>An unusual and vital protein with guanylate cyclase and P4-ATPase domains in a pathogenic protist.</title>
        <authorList>
            <person name="Guenay-Esiyok O."/>
            <person name="Scheib U."/>
            <person name="Noll M."/>
            <person name="Gupta N."/>
        </authorList>
    </citation>
    <scope>FUNCTION</scope>
    <scope>CATALYTIC ACTIVITY</scope>
    <scope>SUBCELLULAR LOCATION</scope>
    <scope>DEVELOPMENTAL STAGE</scope>
    <scope>DOMAIN</scope>
    <scope>TOPOLOGY</scope>
    <scope>DISRUPTION PHENOTYPE</scope>
    <source>
        <strain evidence="9">RH</strain>
    </source>
</reference>
<reference evidence="12" key="5">
    <citation type="journal article" date="2019" name="Nat. Microbiol.">
        <title>Phosphatidic acid governs natural egress in Toxoplasma gondii via a guanylate cyclase receptor platform.</title>
        <authorList>
            <person name="Bisio H."/>
            <person name="Lunghi M."/>
            <person name="Brochet M."/>
            <person name="Soldati-Favre D."/>
        </authorList>
    </citation>
    <scope>FUNCTION</scope>
    <scope>CATALYTIC ACTIVITY</scope>
    <scope>INTERACTION WITH CDC50.1 AND UGO</scope>
    <scope>SUBCELLULAR LOCATION</scope>
    <scope>DOMAIN</scope>
    <scope>DISRUPTION PHENOTYPE</scope>
    <scope>MUTAGENESIS OF ASP-782</scope>
    <source>
        <strain evidence="7">RH</strain>
    </source>
</reference>
<keyword id="KW-1003">Cell membrane</keyword>
<keyword id="KW-0141">cGMP biosynthesis</keyword>
<keyword id="KW-0378">Hydrolase</keyword>
<keyword id="KW-0456">Lyase</keyword>
<keyword id="KW-0460">Magnesium</keyword>
<keyword id="KW-0472">Membrane</keyword>
<keyword id="KW-0479">Metal-binding</keyword>
<keyword id="KW-0812">Transmembrane</keyword>
<keyword id="KW-1133">Transmembrane helix</keyword>
<evidence type="ECO:0000250" key="1">
    <source>
        <dbReference type="UniProtKB" id="P30803"/>
    </source>
</evidence>
<evidence type="ECO:0000250" key="2">
    <source>
        <dbReference type="UniProtKB" id="Q8IDA0"/>
    </source>
</evidence>
<evidence type="ECO:0000255" key="3"/>
<evidence type="ECO:0000255" key="4">
    <source>
        <dbReference type="PROSITE-ProRule" id="PRU00099"/>
    </source>
</evidence>
<evidence type="ECO:0000256" key="5">
    <source>
        <dbReference type="SAM" id="MobiDB-lite"/>
    </source>
</evidence>
<evidence type="ECO:0000269" key="6">
    <source>
    </source>
</evidence>
<evidence type="ECO:0000269" key="7">
    <source>
    </source>
</evidence>
<evidence type="ECO:0000269" key="8">
    <source>
    </source>
</evidence>
<evidence type="ECO:0000269" key="9">
    <source>
    </source>
</evidence>
<evidence type="ECO:0000303" key="10">
    <source>
    </source>
</evidence>
<evidence type="ECO:0000303" key="11">
    <source>
    </source>
</evidence>
<evidence type="ECO:0000305" key="12"/>
<evidence type="ECO:0000305" key="13">
    <source>
    </source>
</evidence>
<evidence type="ECO:0000305" key="14">
    <source>
    </source>
</evidence>
<evidence type="ECO:0000305" key="15">
    <source>
    </source>
</evidence>
<evidence type="ECO:0000312" key="16">
    <source>
        <dbReference type="EMBL" id="EPR59074.1"/>
    </source>
</evidence>
<evidence type="ECO:0000312" key="17">
    <source>
        <dbReference type="Proteomes" id="UP000005641"/>
    </source>
</evidence>
<name>GCY_TOXGG</name>
<accession>S7VVK4</accession>
<comment type="function">
    <text evidence="6 7 8 9">Catalyzes the synthesis of the second messenger cGMP from GTP (PubMed:30742070, PubMed:30992368, PubMed:31235476). During the tachyzoite lytic growth cycle in host cells, detects and transduces environmental changes in potassium, phosphatidic acid and pH levels (PubMed:30992368, PubMed:31235476). By producing cGMP in response to these environmental changes, activates PKG and thereby regulates PKG-dependent microneme secretion which is essential for tachyzoite motility, host cell attachment invasion of and egress from host cells (PubMed:30449726, PubMed:30742070, PubMed:30992368, PubMed:31235476). May play a role in the fission of connected tachyzoites at their basal pole during egress (PubMed:30742070). Does not display flippase activity towards phosphatidylserine, phosphatidic acid or phosphatidylcholine (PubMed:30742070).</text>
</comment>
<comment type="catalytic activity">
    <reaction evidence="13 14 15">
        <text>GTP = 3',5'-cyclic GMP + diphosphate</text>
        <dbReference type="Rhea" id="RHEA:13665"/>
        <dbReference type="ChEBI" id="CHEBI:33019"/>
        <dbReference type="ChEBI" id="CHEBI:37565"/>
        <dbReference type="ChEBI" id="CHEBI:57746"/>
        <dbReference type="EC" id="4.6.1.2"/>
    </reaction>
</comment>
<comment type="cofactor">
    <cofactor evidence="2">
        <name>Mg(2+)</name>
        <dbReference type="ChEBI" id="CHEBI:18420"/>
    </cofactor>
    <cofactor evidence="2">
        <name>Mn(2+)</name>
        <dbReference type="ChEBI" id="CHEBI:29035"/>
    </cofactor>
    <text evidence="1 2">Binds 2 magnesium ions per subunit (By similarity). Is also active with manganese (in vitro) (By similarity).</text>
</comment>
<comment type="subunit">
    <text evidence="7">Interacts with chaperone CDC50.1; the interaction regulates guanylate cyclase GC trafficking and sensing environmental changes (PubMed:30742070). Interacts with UGO; the interaction regulates guanylate cyclase GC trafficking and catalytic activity (PubMed:30742070).</text>
</comment>
<comment type="subcellular location">
    <subcellularLocation>
        <location evidence="6 7 8 9">Cell membrane</location>
        <topology evidence="3">Multi-pass membrane protein</topology>
    </subcellularLocation>
    <text evidence="6 7 8 9">Localizes to the apical cap in extracellular tachyzoites (PubMed:30449726, PubMed:30992368). During tachyzoite intracellular replication in the host cell, localizes to the apical cap, to the cytoplasm in disperse foci and to the residual body (PubMed:30742070, PubMed:30992368, PubMed:31235476).</text>
</comment>
<comment type="developmental stage">
    <text evidence="9">Expressed in tachyzoites.</text>
</comment>
<comment type="domain">
    <text evidence="6 7 13 15">The P-type ATPase-like domain is required for GC apical localization and microneme secretion in tachyzoites (PubMed:30449726). May act as a sensor for external changes in ionic conditions such as potassium or pH levels (Probable). May act as a sensor for vacuolar changes in phosphatidic acid or pH levels (Probable). Does not display flippase activity towards phosphatidylserine, phosphatidic acid or phosphatidylcholine (PubMed:30742070).</text>
</comment>
<comment type="disruption phenotype">
    <text evidence="6 7 8 9">Conditional knockout in tachyzoites blocks lytic parasite growth in host cells (PubMed:30449726, PubMed:30742070, PubMed:30992368, PubMed:31235476). Reduces tachyzoite attachment to host cell (PubMed:30449726, PubMed:30992368). Prevents invasion of and egress from host cells without affecting tachyzoite replication inside the host cell (PubMed:30449726, PubMed:30742070, PubMed:30992368, PubMed:31235476). Impairs tachyzoite gliding motility (PubMed:30449726, PubMed:30992368, PubMed:31235476). Impairs stimulated microneme secretion without affecting basal microneme secretion or dense granule protein secretion (PubMed:30449726, PubMed:30742070, PubMed:30992368). cGMP production is reduced (PubMed:30992368, PubMed:31235476). cGMP production and microneme secretion is impaired in response to phosphatidic acid (PubMed:30742070). Increase in cytoplasmic Ca(2+) levels in response to a decrease in extracellular potassium levels or in pH is impaired (PubMed:30992368). Basal phosphatidic acid levels are reduced (PubMed:30992368). Infection of mice with knockout parasites (strain ME49) does not cause lethal toxoplasmosis; mice show severe reduction in parasite burden and have no detectable cyst formation in tissues (PubMed:30449726).</text>
</comment>
<comment type="similarity">
    <text evidence="12">In the N-terminal section; belongs to the cation transport ATPase (P-type) (TC 3.A.3) family. Type IV subfamily.</text>
</comment>
<comment type="similarity">
    <text evidence="12">In the C-terminal section; belongs to the adenylyl cyclase class-4/guanylyl cyclase family.</text>
</comment>
<comment type="caution">
    <text evidence="9">The guanylate cyclase domains 1 and 2 lack catalytic activity when expressed on their own or in combination.</text>
</comment>
<gene>
    <name evidence="10" type="primary">GC</name>
    <name evidence="16" type="ORF">TGGT1_254370</name>
</gene>
<sequence length="4367" mass="477084">MKKTRTTAAERSQRARKRPHDEHRGRGREHGGARDPGAGGQAMKGAEKGRNPKHQATQKQMSFLQGKHQQRVGNVVSRLGPAAVGQTTLMDKKRKLYSDTSQQPLWSLRKITINPTDKDDLRRFPSNAIYTHRYSAMTFIFKNLWEQFHRVINWWFLVMAIIQAIPQLHYNPNHAWSTALPFAIVLVFGMLKDAFTDLGRRERDRVLNQRVCCIVDGHTPQLRLLQWQGVRVGNILRLTDGEEVPADIVVLATSNTDGVAYVETSKLDGETNLKFKQGVKETRGESSPLSIAGIRGRVVCEKPCAVMDAFTGSLKLDAHPRATPLDIVNFIQRGSHIRNTEWLYGVVIYTGEDTRIQKNAAPPGFKRPHIEKDINTYLFISFFIVFLTILISVMSKWSVQERDSGDTGVTDAGASSGSGSSSGETSQTYGSSVEFMLGSRDLLQNPWMSILRFLAVYAPVLPLSLPLILDVVYLLQSVLIEGDIHIRGGGRTPATGRGNGSTSSMTVADDGLPDGEAGGLDSAHSSQNASLQQPLSIVSKGFSKTRRFLSEKFSSPSSGQIGGNQDRRETPREDDERETNGENVPSATPLLPGGEAACVATGDEETLRADAEGAQERDREAEGNREQLKSVPTGTHAAWRPGALDSTAEANEDEDPDVLHAEKASGFGARRSDDRDRKSSCSRYPETGGEKTSHAISGRFTGSVMPSTYTKLHGDIANAGFESAWQPYANGHTHTRTLLLATGGGPNSLCATGNFEREDVWAEVHTPALNPNLGQVDFIFTDKTGTITENDMTFSMCSVAGKIYGMASCGGAGYEGAESSEYGSRVWTANETSARSSRDRLVPHLQRGTSAASSRSQSAPASANDEGTPRRIPTLMLRPQTLTNQQTGQQSPVLPASREDEKGKDASPGAADSPASSLSVSRFFGSVSYEGRLEETGSQKEEDSRSDRVSLSPSEGRVSGSRPQLACEGIHGATLRRRTVGIQSQHSSQSLLSSRQQSEDERQYTEGEEGETEDDRSTVSRRGRDRMYSRDYHRESRSSSPRDGELSDRYPLRCIRSIGDGYIIRGGRTGNVVMRHPSGMSFDSRPSSQFTFSSPVVGDDSFDDPRRAMYFGRGSPRSLTPPSERGTASPSVGEEGPPLSPQISPTGSARGRVPRSSSLYMPAVDEGEDRERYFRPRRRMLRPGASLLPPLSPSPSRAGVPFLYDNIDFPTGFRETPMEGQIRRNCDFYDASIFTDLARKDLRSHRINEFIKCMALCNTVVPWVYTATPCSSSCPGLPSTANFSVAAYPTGGGANSLFSCSASAFAGPVTQGFPSVTHPAALASDGAAGADEDEEKNVSQLLLPSGTSASSGAPSGPRGDPQLVSLLGRQGQGHGSLGAPGSGLPTSGCLGGAGGSGARGPMGLHGSRRSLPGSSDCRVPSTARPAPLLGSDAAGRGFGPDYVPSPRPLSPAGPPNASTGSLGEAPKADKPASPEEAASPGKDGEEAPSSTPRCVFAPSTLVPPSVLRSHTGAGGLRPSKSLARGVSFKEKHEEFAFSKDEDTATVDQDDTQSATDEEHDVEGEEEEAGKSAERLTKAKRNRSASASLMSLKSKVTASGRDVADLLFRRGSRGNSGTDPDPASARTVGRSSSVERAQQPPTHGGFSTVTGTGESRSSLVSIIKYQASSPDEECLVSAASHMGYTLVSRTNNYAILNINGQERRWQIIGVNEFTQKRGRMSIVVRPQEWTEGSILYVKGADVAMLDLLSTSFTRGHDFRQSFSCLSRYAESFSGGRGPQVSLSRLQSNSSAKGSGGPPVRRSVSGSDPRLQPSRSVSLPRTVPPGQETPMAGDQLEGPEAAETVNPSGQTYSQGEEEEGLRSRLARADSMLRSLNPALYNYDKQHQRGHGPEGDEGSHELEGHDAHTGDSHGGHHRDQAEPRAGDAVGPESASRLPQKTQNRLPQHLGNAGVCAHGHAWTPSEENYCAAFFDDDEDELIALGDIALVEQHLKRFSLQGLRTMALACRYLTQEETETYKRLYTDACASVYCRAERLEEVAEDMERDLEYLGITGVRDKLQEQVPETLQLMMEAGIRVWMVTGDNVEYALHICHSCRLLTSRTRIFHAALEFSGRKAKREGVMLYELFRKARRLKRSDEHICLVVTGPNLRTFLNHPDLQTYFLNMACCSDVVVAARVTPSQKAEMVRLVKKRLTPQPITMAVGDGGNDVAMLQEAHVGVAIRGKDSAAAVAAAYADYSFTEFRFLQRLLFVHGRLSLMRVSTVILWSFFKSLCIGLPTFLFQPQAFWSAVEVYDPLLLMIVDFFWTTLPGIIHGYSDQDLPTHLLPSVPVLYTPGRRRLYFNGFRFILWTVEGIIYSFLIFYLLQATWMDGNTFHDGQVLGFHSYGILLLFGSLLQSNVRIILETSLWTPTFLFTTIVLCTIMFFPTVLLYSVTGWPRRYMELAGRVVFAWPMLYFLIPLWVSIGILVQLLLQVFTSSLFPNISGSVKQYLAQKQADVNYRRKASKHPFSQPRPRLLPGGHDEYGLFCGMGSCWSLFKRSLWFMGGCCLMDTPNVADDFTASPALCAELRERFNPLRRKSVADRLPPPRRFRINENFLSYTGASEEKGADGVQRDLGGKGSACGPGAAGLAAGTGAPGAGRSKSVFGGGGGVMPMADMAADLETENSLSSNGSEQEKAGDNVTKLVKVSHLINRFTLRFKDMQLEADYQIHNKKSFLKRLVPWYRVIFMLIALYQLLSFLTEYFIDIHWNPGETEMEPWMCVPTLVVEIGFAAVVVCTFYDFIFLDHFSLILNSIVFLMVSSSIVFYTASHVDGTLTSVLFPVFTFVILRISFLQAVVWNILFLIVTVARFMLDKKYLPPLNFVHYIPLFIGIDVFVAFVGYRLEYNQRKSFLLDYSVDASRRKQREILNTMLPSFVVDQMINSELNEEGIPTSLKAEDRGTVSVIFCDVYEFQHVVASIEPTRLVEVLDSLFLCFDRSAEQFGCTKIETVFETYLAAAGLQPGREASPASYQQDACDALDMALAMLEVAAQIRYEVKSNQGVLSGSAVGSSSAVGPAVSASNLEASGNHMEPRLSLHGHNSGVAMGSRMNSSRFHRQKTGSVVRTVLQSRPQRIRVKIGIHSGRVISGVVGAKKPQYALFGDTVNTASRMKTTGQPGYIHISEDSYELVKGDDTLEYESRHTEVKGKGLMNTYLLVRVKGSPYPHFDDQEADEGDVISETGGQNGESRRSTASLPRQLETAGASSGVHTGEAMGCFASVGSRGESQTAADAAAAEAIEEDIQVEIDEEGVVEDTVEKAVEDVRRLRNEGSHAVASDDFPVSQAGAAQPRRCSRFLFQNAEEHGAAEPQRGEGARLILSPGQTEGTRQSEKEGSALGSNIAASARADRRPAGRREDSRGDSRFDYESMTTQQLLRIYRRQQKVAKVLQWIDEELRGQRDTAHRHARTADIVAKLLASSGDEQAAGESSEADHDEVPLDEIKEELRRQAREANEQESAKRSGGDAPPHTPTRKALLKAFRSEIVHGCAAPTEEEKTAKEGRESEVALASPETESRDANGQRVSERDASDAREGSASPQPDHAAPPSGLPQGLKGQETEKQQGWKLFRSASLVRAAGQSFASLFRRRKPAAPSEAASPSSADTPMDSRVSPTSVDDEDLEQNRVTRIGVSSEWLLLKFKDKNLEARYRTHFYNNKSNINTIEQALIIFLVTFCVQTLTRLALPRFYVVCSHHTINLHVCTGLYWAVRATYTLAAFVLWMLFHYRNRKEVATCLELRWMVFLLNLLFISASCVFALSNSWGVCGQQQEDHGASETAVENTLVALSHLAKDGSFPADDAEVNSVAGSPLAQAMHSPFTTAGVSRASRMLRSGGVSVSGGTDCTGVGTSGEEGSDLVTANGRAYTYWLLSDTIELFFYIVILHHNTGLLFQNCILVDVLLMTMSLTFIITTARETASTVSTIATFPCYVFFNLVSAYCKEYIDRLTFYVNEHAKTTESRATQLLNDMLPKQVLEEFQQDKLKLAYLHENVTFLFADICGFTSWAKGVDACEVVTMLQKLFAKFDKDSTKFGLYKLCTIGDAYVAVSEPVTAENAQDTDPREGMWLVYEMAKAMIGNITEVRERLCIPNLNMRIGLHYGSCVGGVIGSGRLRYDLWGMDVLTGNMMESNGVPGKINVSEILKNEMEKGFPGEFVFKFNKTVAVLQSTVDSYLIRPAKDFDEDEELAAAAATMAVAGPSASLQQGGGAIPQVQAVASGLRRDATSIRGNYRRRFTILGSAPRVLGRRQSLRGHQFSALALASHGDSGPSDEPRHLGDEGQAAGSVTSHDGPLREEVEDDEIDGLKQLRKEIERAGGLGLDASPSDIGSTPGSALGS</sequence>
<organism evidence="17">
    <name type="scientific">Toxoplasma gondii (strain ATCC 50853 / GT1)</name>
    <dbReference type="NCBI Taxonomy" id="507601"/>
    <lineage>
        <taxon>Eukaryota</taxon>
        <taxon>Sar</taxon>
        <taxon>Alveolata</taxon>
        <taxon>Apicomplexa</taxon>
        <taxon>Conoidasida</taxon>
        <taxon>Coccidia</taxon>
        <taxon>Eucoccidiorida</taxon>
        <taxon>Eimeriorina</taxon>
        <taxon>Sarcocystidae</taxon>
        <taxon>Toxoplasma</taxon>
    </lineage>
</organism>
<protein>
    <recommendedName>
        <fullName evidence="10">Guanylate cyclase</fullName>
        <shortName evidence="10">TgGC</shortName>
        <ecNumber evidence="13 14 15">4.6.1.2</ecNumber>
    </recommendedName>
    <alternativeName>
        <fullName evidence="12">Guanylyl cyclase</fullName>
    </alternativeName>
    <alternativeName>
        <fullName evidence="11">TgATPaseP-GC</fullName>
    </alternativeName>
</protein>